<protein>
    <recommendedName>
        <fullName evidence="4">Extended FMRFamide-1</fullName>
        <shortName evidence="4">FMRFa-1</shortName>
    </recommendedName>
</protein>
<evidence type="ECO:0000250" key="1">
    <source>
        <dbReference type="UniProtKB" id="P34405"/>
    </source>
</evidence>
<evidence type="ECO:0000255" key="2"/>
<evidence type="ECO:0000269" key="3">
    <source>
    </source>
</evidence>
<evidence type="ECO:0000303" key="4">
    <source>
    </source>
</evidence>
<evidence type="ECO:0000305" key="5"/>
<evidence type="ECO:0000305" key="6">
    <source>
    </source>
</evidence>
<accession>B0M3C6</accession>
<comment type="function">
    <text evidence="1">FMRFamides and FMRFamide-like peptides are neuropeptides.</text>
</comment>
<comment type="subcellular location">
    <subcellularLocation>
        <location evidence="6">Secreted</location>
    </subcellularLocation>
</comment>
<comment type="similarity">
    <text evidence="2">Belongs to the FARP (FMRF amide related peptide) family.</text>
</comment>
<organism>
    <name type="scientific">Mantophasma kudubergense</name>
    <name type="common">Gladiator</name>
    <name type="synonym">Heel-walker</name>
    <dbReference type="NCBI Taxonomy" id="1037657"/>
    <lineage>
        <taxon>Eukaryota</taxon>
        <taxon>Metazoa</taxon>
        <taxon>Ecdysozoa</taxon>
        <taxon>Arthropoda</taxon>
        <taxon>Hexapoda</taxon>
        <taxon>Insecta</taxon>
        <taxon>Pterygota</taxon>
        <taxon>Neoptera</taxon>
        <taxon>Polyneoptera</taxon>
        <taxon>Mantophasmatodea</taxon>
        <taxon>Mantophasmatidae</taxon>
        <taxon>Mantophasma</taxon>
    </lineage>
</organism>
<proteinExistence type="evidence at protein level"/>
<name>FAR1_MANKU</name>
<reference evidence="5" key="1">
    <citation type="journal article" date="2012" name="Syst. Biol.">
        <title>Peptidomics-based phylogeny and biogeography of Mantophasmatodea (Hexapoda).</title>
        <authorList>
            <person name="Predel R."/>
            <person name="Neupert S."/>
            <person name="Huetteroth W."/>
            <person name="Kahnt J."/>
            <person name="Waidelich D."/>
            <person name="Roth S."/>
        </authorList>
    </citation>
    <scope>PROTEIN SEQUENCE</scope>
    <scope>AMIDATION AT LEU-7</scope>
    <source>
        <tissue evidence="3">Thoracic perisympathetic organs</tissue>
    </source>
</reference>
<sequence>AQSFLRL</sequence>
<dbReference type="GO" id="GO:0005576">
    <property type="term" value="C:extracellular region"/>
    <property type="evidence" value="ECO:0007669"/>
    <property type="project" value="UniProtKB-SubCell"/>
</dbReference>
<dbReference type="GO" id="GO:0007218">
    <property type="term" value="P:neuropeptide signaling pathway"/>
    <property type="evidence" value="ECO:0007669"/>
    <property type="project" value="UniProtKB-KW"/>
</dbReference>
<keyword id="KW-0027">Amidation</keyword>
<keyword id="KW-0903">Direct protein sequencing</keyword>
<keyword id="KW-0527">Neuropeptide</keyword>
<keyword id="KW-0964">Secreted</keyword>
<feature type="peptide" id="PRO_0000420772" description="Extended FMRFamide-1" evidence="3">
    <location>
        <begin position="1"/>
        <end position="7"/>
    </location>
</feature>
<feature type="modified residue" description="Leucine amide" evidence="3">
    <location>
        <position position="7"/>
    </location>
</feature>
<feature type="unsure residue" description="L or I" evidence="3">
    <location>
        <position position="5"/>
    </location>
</feature>
<feature type="unsure residue" description="L or I" evidence="3">
    <location>
        <position position="7"/>
    </location>
</feature>